<sequence>MDTETSPLLSHNLSTREGIKQSTQGLLAHTIARYPGTTAILLGILILLVIILIIVAIVYYNRSVDCKSSMPKPPPSYYVQQPEPHHHFPVFFRKRKNSTSLQSHIPSDEQLAELAHS</sequence>
<protein>
    <recommendedName>
        <fullName evidence="8">Minor capsid protein p17</fullName>
    </recommendedName>
</protein>
<organism>
    <name type="scientific">African swine fever virus (strain Badajoz 1971 Vero-adapted)</name>
    <name type="common">Ba71V</name>
    <name type="synonym">ASFV</name>
    <dbReference type="NCBI Taxonomy" id="10498"/>
    <lineage>
        <taxon>Viruses</taxon>
        <taxon>Varidnaviria</taxon>
        <taxon>Bamfordvirae</taxon>
        <taxon>Nucleocytoviricota</taxon>
        <taxon>Pokkesviricetes</taxon>
        <taxon>Asfuvirales</taxon>
        <taxon>Asfarviridae</taxon>
        <taxon>Asfivirus</taxon>
        <taxon>African swine fever virus</taxon>
    </lineage>
</organism>
<accession>Q89424</accession>
<evidence type="ECO:0000255" key="1"/>
<evidence type="ECO:0000269" key="2">
    <source>
    </source>
</evidence>
<evidence type="ECO:0000269" key="3">
    <source>
    </source>
</evidence>
<evidence type="ECO:0000269" key="4">
    <source>
    </source>
</evidence>
<evidence type="ECO:0000269" key="5">
    <source>
    </source>
</evidence>
<evidence type="ECO:0000269" key="6">
    <source>
    </source>
</evidence>
<evidence type="ECO:0000269" key="7">
    <source>
    </source>
</evidence>
<evidence type="ECO:0000303" key="8">
    <source>
    </source>
</evidence>
<evidence type="ECO:0000305" key="9"/>
<evidence type="ECO:0000305" key="10">
    <source>
    </source>
</evidence>
<proteinExistence type="evidence at protein level"/>
<comment type="function">
    <text evidence="2 3 5">Together with the penton and the other minor capsid proteins (M1249L, p49), forms a complicated network immediately below the outer capsid shell, stabilizing the whole capsid (PubMed:31624094). Three copies of p17 encircle each p72 capsomer in the inner capsid shell, anchoring p72 capsomers on the inner membrane (PubMed:31624094). Required for the assembly of the capsid and icosahedral morphogenesis (PubMed:20504920). Additionally, inhibits the host cGAS-STING pathway through its interaction with STING1 and subsequent interference of the recruitment of downstream components TBK1 and IKBKE (PubMed:35844609).</text>
</comment>
<comment type="subunit">
    <text evidence="3 5">Interacts with the minor capsid protein M1249L and with the hexon capsid protein p72 capsomers; these interactions form a rigid zipper structure that stabilizes the capsomers. Interacts with host STING1 (PubMed:35844609).</text>
</comment>
<comment type="subcellular location">
    <subcellularLocation>
        <location evidence="7 10">Virion membrane</location>
        <topology evidence="1">Single-pass membrane protein</topology>
    </subcellularLocation>
    <subcellularLocation>
        <location evidence="5 6 7">Host endoplasmic reticulum membrane</location>
        <topology evidence="1">Single-pass membrane protein</topology>
    </subcellularLocation>
    <subcellularLocation>
        <location evidence="5">Host Golgi apparatus membrane</location>
        <topology evidence="1">Single-pass membrane protein</topology>
    </subcellularLocation>
    <text>Found in the inner envelope of the virus.</text>
</comment>
<comment type="induction">
    <text evidence="4">Expressed in the late phase of the viral replicative cycle.</text>
</comment>
<comment type="similarity">
    <text evidence="9">Belongs to the asfivirus minor capsid protein p17 family.</text>
</comment>
<dbReference type="EMBL" id="U18466">
    <property type="protein sequence ID" value="AAA65336.1"/>
    <property type="molecule type" value="Genomic_DNA"/>
</dbReference>
<dbReference type="EMBL" id="U15193">
    <property type="protein sequence ID" value="AAA67883.1"/>
    <property type="molecule type" value="Genomic_DNA"/>
</dbReference>
<dbReference type="RefSeq" id="NP_042800.1">
    <property type="nucleotide sequence ID" value="NC_001659.2"/>
</dbReference>
<dbReference type="SMR" id="Q89424"/>
<dbReference type="GeneID" id="22220336"/>
<dbReference type="KEGG" id="vg:22220336"/>
<dbReference type="Proteomes" id="UP000000624">
    <property type="component" value="Segment"/>
</dbReference>
<dbReference type="GO" id="GO:0044167">
    <property type="term" value="C:host cell endoplasmic reticulum membrane"/>
    <property type="evidence" value="ECO:0007669"/>
    <property type="project" value="UniProtKB-SubCell"/>
</dbReference>
<dbReference type="GO" id="GO:0044178">
    <property type="term" value="C:host cell Golgi membrane"/>
    <property type="evidence" value="ECO:0007669"/>
    <property type="project" value="UniProtKB-SubCell"/>
</dbReference>
<dbReference type="GO" id="GO:0016020">
    <property type="term" value="C:membrane"/>
    <property type="evidence" value="ECO:0007669"/>
    <property type="project" value="UniProtKB-KW"/>
</dbReference>
<dbReference type="GO" id="GO:0055036">
    <property type="term" value="C:virion membrane"/>
    <property type="evidence" value="ECO:0007669"/>
    <property type="project" value="UniProtKB-SubCell"/>
</dbReference>
<dbReference type="GO" id="GO:0052170">
    <property type="term" value="P:symbiont-mediated suppression of host innate immune response"/>
    <property type="evidence" value="ECO:0007669"/>
    <property type="project" value="UniProtKB-KW"/>
</dbReference>
<feature type="chain" id="PRO_0000373401" description="Minor capsid protein p17">
    <location>
        <begin position="1"/>
        <end position="117"/>
    </location>
</feature>
<feature type="transmembrane region" description="Helical" evidence="1">
    <location>
        <begin position="39"/>
        <end position="59"/>
    </location>
</feature>
<feature type="glycosylation site" description="N-linked (GlcNAc...) asparagine; by host" evidence="1">
    <location>
        <position position="12"/>
    </location>
</feature>
<feature type="glycosylation site" description="N-linked (GlcNAc...) asparagine; by host" evidence="1">
    <location>
        <position position="61"/>
    </location>
</feature>
<feature type="glycosylation site" description="N-linked (GlcNAc...) asparagine; by host" evidence="1">
    <location>
        <position position="97"/>
    </location>
</feature>
<name>P17_ASFB7</name>
<keyword id="KW-0325">Glycoprotein</keyword>
<keyword id="KW-1038">Host endoplasmic reticulum</keyword>
<keyword id="KW-1040">Host Golgi apparatus</keyword>
<keyword id="KW-1043">Host membrane</keyword>
<keyword id="KW-0945">Host-virus interaction</keyword>
<keyword id="KW-1090">Inhibition of host innate immune response by virus</keyword>
<keyword id="KW-0426">Late protein</keyword>
<keyword id="KW-0472">Membrane</keyword>
<keyword id="KW-1185">Reference proteome</keyword>
<keyword id="KW-0812">Transmembrane</keyword>
<keyword id="KW-1133">Transmembrane helix</keyword>
<keyword id="KW-0899">Viral immunoevasion</keyword>
<keyword id="KW-0946">Virion</keyword>
<gene>
    <name type="ordered locus">Ba71V-107</name>
    <name type="ORF">D117L</name>
</gene>
<organismHost>
    <name type="scientific">Ornithodoros</name>
    <name type="common">relapsing fever ticks</name>
    <dbReference type="NCBI Taxonomy" id="6937"/>
</organismHost>
<organismHost>
    <name type="scientific">Sus scrofa</name>
    <name type="common">Pig</name>
    <dbReference type="NCBI Taxonomy" id="9823"/>
</organismHost>
<reference key="1">
    <citation type="journal article" date="1995" name="Virology">
        <title>Mapping and sequence of the gene encoding protein p17, a major African swine fever virus structural protein.</title>
        <authorList>
            <person name="Simon-Mateo C."/>
            <person name="Freije J.M.P."/>
            <person name="Andres G."/>
            <person name="Lopez-Otin C."/>
            <person name="Vinuela E."/>
        </authorList>
    </citation>
    <scope>NUCLEOTIDE SEQUENCE [GENOMIC DNA]</scope>
</reference>
<reference key="2">
    <citation type="journal article" date="1995" name="Virology">
        <title>Analysis of the complete nucleotide sequence of African swine fever virus.</title>
        <authorList>
            <person name="Yanez R.J."/>
            <person name="Rodriguez J.M."/>
            <person name="Nogal M.L."/>
            <person name="Yuste L."/>
            <person name="Enriquez C."/>
            <person name="Rodriguez J.F."/>
            <person name="Vinuela E."/>
        </authorList>
    </citation>
    <scope>NUCLEOTIDE SEQUENCE [LARGE SCALE GENOMIC DNA]</scope>
</reference>
<reference key="3">
    <citation type="journal article" date="1996" name="J. Virol.">
        <title>Involvement of the endoplasmic reticulum in the assembly and envelopment of African swine fever virus.</title>
        <authorList>
            <person name="Cobbold C."/>
            <person name="Whittle J.T."/>
            <person name="Wileman T."/>
        </authorList>
    </citation>
    <scope>SUBCELLULAR LOCATION</scope>
</reference>
<reference key="4">
    <citation type="journal article" date="1998" name="J. Virol.">
        <title>African swine fever virus is wrapped by the endoplasmic reticulum.</title>
        <authorList>
            <person name="Rouiller I."/>
            <person name="Brookes S.M."/>
            <person name="Hyatt A.D."/>
            <person name="Windsor M."/>
            <person name="Wileman T."/>
        </authorList>
    </citation>
    <scope>SUBCELLULAR LOCATION</scope>
</reference>
<reference key="5">
    <citation type="journal article" date="2010" name="J. Virol.">
        <title>African swine fever virus protein p17 is essential for the progression of viral membrane precursors toward icosahedral intermediates.</title>
        <authorList>
            <person name="Suarez C."/>
            <person name="Gutierrez-Berzal J."/>
            <person name="Andres G."/>
            <person name="Salas M.L."/>
            <person name="Rodriguez J.M."/>
        </authorList>
    </citation>
    <scope>FUNCTION</scope>
</reference>
<reference key="6">
    <citation type="journal article" date="2018" name="J. Virol.">
        <title>A Proteomic Atlas of the African Swine Fever Virus Particle.</title>
        <authorList>
            <person name="Alejo A."/>
            <person name="Matamoros T."/>
            <person name="Guerra M."/>
            <person name="Andres G."/>
        </authorList>
    </citation>
    <scope>SUBCELLULAR LOCATION</scope>
</reference>
<reference key="7">
    <citation type="journal article" date="2020" name="J. Virol.">
        <title>The African Swine Fever Virus Transcriptome.</title>
        <authorList>
            <person name="Cackett G."/>
            <person name="Matelska D."/>
            <person name="Sykora M."/>
            <person name="Portugal R."/>
            <person name="Malecki M."/>
            <person name="Baehler J."/>
            <person name="Dixon L."/>
            <person name="Werner F."/>
        </authorList>
    </citation>
    <scope>INDUCTION</scope>
</reference>
<reference key="8">
    <citation type="journal article" date="2022" name="Front. Immunol.">
        <title>African Swine Fever Virus Structural Protein p17 Inhibits cGAS-STING Signaling Pathway Through Interacting With STING.</title>
        <authorList>
            <person name="Zheng W."/>
            <person name="Xia N."/>
            <person name="Zhang J."/>
            <person name="Cao Q."/>
            <person name="Jiang S."/>
            <person name="Luo J."/>
            <person name="Wang H."/>
            <person name="Chen N."/>
            <person name="Zhang Q."/>
            <person name="Meurens F."/>
            <person name="Zhu J."/>
        </authorList>
    </citation>
    <scope>FUNCTION</scope>
    <scope>INTERACTION WITH HOST STING1</scope>
    <scope>SUBCELLULAR LOCATION</scope>
</reference>
<reference key="9">
    <citation type="journal article" date="2019" name="Science">
        <title>Architecture of African swine fever virus and implications for viral assembly.</title>
        <authorList>
            <person name="Wang N."/>
            <person name="Zhao D."/>
            <person name="Wang J."/>
            <person name="Zhang Y."/>
            <person name="Wang M."/>
            <person name="Gao Y."/>
            <person name="Li F."/>
            <person name="Wang J."/>
            <person name="Bu Z."/>
            <person name="Rao Z."/>
            <person name="Wang X."/>
        </authorList>
    </citation>
    <scope>STRUCTURE BY ELECTRON MICROSCOPY (4.8 ANGSTROMS) OF THE ASFV CAPSID</scope>
    <scope>FUNCTION</scope>
    <scope>SUBCELLULAR LOCATION</scope>
    <scope>IDENTIFICATION</scope>
    <scope>INTERACTION WITH HEXON CAPSID PROTEIN P72</scope>
    <scope>INTERACTION WITH MINOR CAPSID PROTEIN M1249L</scope>
</reference>